<organism>
    <name type="scientific">Escherichia coli O157:H7</name>
    <dbReference type="NCBI Taxonomy" id="83334"/>
    <lineage>
        <taxon>Bacteria</taxon>
        <taxon>Pseudomonadati</taxon>
        <taxon>Pseudomonadota</taxon>
        <taxon>Gammaproteobacteria</taxon>
        <taxon>Enterobacterales</taxon>
        <taxon>Enterobacteriaceae</taxon>
        <taxon>Escherichia</taxon>
    </lineage>
</organism>
<evidence type="ECO:0000250" key="1">
    <source>
        <dbReference type="UniProtKB" id="P0AGF4"/>
    </source>
</evidence>
<evidence type="ECO:0000255" key="2"/>
<evidence type="ECO:0000305" key="3"/>
<accession>P0AGF5</accession>
<accession>P09098</accession>
<feature type="chain" id="PRO_0000050295" description="D-xylose-proton symporter">
    <location>
        <begin position="1"/>
        <end position="491"/>
    </location>
</feature>
<feature type="topological domain" description="Cytoplasmic" evidence="2">
    <location>
        <begin position="1"/>
        <end position="9"/>
    </location>
</feature>
<feature type="transmembrane region" description="Helical; Name=1" evidence="2">
    <location>
        <begin position="10"/>
        <end position="30"/>
    </location>
</feature>
<feature type="topological domain" description="Periplasmic" evidence="2">
    <location>
        <begin position="31"/>
        <end position="55"/>
    </location>
</feature>
<feature type="transmembrane region" description="Helical; Name=2" evidence="2">
    <location>
        <begin position="56"/>
        <end position="76"/>
    </location>
</feature>
<feature type="topological domain" description="Cytoplasmic" evidence="2">
    <location>
        <begin position="77"/>
        <end position="89"/>
    </location>
</feature>
<feature type="transmembrane region" description="Helical; Name=3" evidence="2">
    <location>
        <begin position="90"/>
        <end position="110"/>
    </location>
</feature>
<feature type="topological domain" description="Periplasmic" evidence="2">
    <location>
        <begin position="111"/>
        <end position="133"/>
    </location>
</feature>
<feature type="transmembrane region" description="Helical; Name=4" evidence="2">
    <location>
        <begin position="134"/>
        <end position="154"/>
    </location>
</feature>
<feature type="topological domain" description="Cytoplasmic" evidence="2">
    <location>
        <begin position="155"/>
        <end position="165"/>
    </location>
</feature>
<feature type="transmembrane region" description="Helical; Name=5" evidence="2">
    <location>
        <begin position="166"/>
        <end position="186"/>
    </location>
</feature>
<feature type="topological domain" description="Periplasmic" evidence="2">
    <location>
        <begin position="187"/>
        <end position="200"/>
    </location>
</feature>
<feature type="transmembrane region" description="Helical; Name=6" evidence="2">
    <location>
        <begin position="201"/>
        <end position="221"/>
    </location>
</feature>
<feature type="topological domain" description="Cytoplasmic" evidence="2">
    <location>
        <begin position="222"/>
        <end position="272"/>
    </location>
</feature>
<feature type="transmembrane region" description="Helical; Name=7" evidence="2">
    <location>
        <begin position="273"/>
        <end position="293"/>
    </location>
</feature>
<feature type="topological domain" description="Periplasmic" evidence="2">
    <location>
        <begin position="294"/>
        <end position="312"/>
    </location>
</feature>
<feature type="transmembrane region" description="Helical; Name=8" evidence="2">
    <location>
        <begin position="313"/>
        <end position="333"/>
    </location>
</feature>
<feature type="topological domain" description="Cytoplasmic" evidence="2">
    <location>
        <begin position="334"/>
        <end position="343"/>
    </location>
</feature>
<feature type="transmembrane region" description="Helical; Name=9" evidence="2">
    <location>
        <begin position="344"/>
        <end position="364"/>
    </location>
</feature>
<feature type="topological domain" description="Periplasmic" evidence="2">
    <location>
        <begin position="365"/>
        <end position="369"/>
    </location>
</feature>
<feature type="transmembrane region" description="Helical; Name=10" evidence="2">
    <location>
        <begin position="370"/>
        <end position="390"/>
    </location>
</feature>
<feature type="topological domain" description="Cytoplasmic" evidence="2">
    <location>
        <begin position="391"/>
        <end position="407"/>
    </location>
</feature>
<feature type="transmembrane region" description="Helical; Name=11" evidence="2">
    <location>
        <begin position="408"/>
        <end position="428"/>
    </location>
</feature>
<feature type="topological domain" description="Periplasmic" evidence="2">
    <location>
        <begin position="429"/>
        <end position="442"/>
    </location>
</feature>
<feature type="transmembrane region" description="Helical; Name=12" evidence="2">
    <location>
        <begin position="443"/>
        <end position="463"/>
    </location>
</feature>
<feature type="topological domain" description="Cytoplasmic" evidence="2">
    <location>
        <begin position="464"/>
        <end position="491"/>
    </location>
</feature>
<feature type="binding site" evidence="1">
    <location>
        <position position="168"/>
    </location>
    <ligand>
        <name>beta-D-xylose</name>
        <dbReference type="ChEBI" id="CHEBI:28161"/>
    </ligand>
</feature>
<feature type="binding site" evidence="1">
    <location>
        <begin position="288"/>
        <end position="289"/>
    </location>
    <ligand>
        <name>beta-D-xylose</name>
        <dbReference type="ChEBI" id="CHEBI:28161"/>
    </ligand>
</feature>
<feature type="binding site" evidence="1">
    <location>
        <position position="294"/>
    </location>
    <ligand>
        <name>beta-D-xylose</name>
        <dbReference type="ChEBI" id="CHEBI:28161"/>
    </ligand>
</feature>
<feature type="binding site" evidence="1">
    <location>
        <position position="392"/>
    </location>
    <ligand>
        <name>beta-D-xylose</name>
        <dbReference type="ChEBI" id="CHEBI:28161"/>
    </ligand>
</feature>
<feature type="binding site" evidence="1">
    <location>
        <position position="415"/>
    </location>
    <ligand>
        <name>beta-D-xylose</name>
        <dbReference type="ChEBI" id="CHEBI:28161"/>
    </ligand>
</feature>
<protein>
    <recommendedName>
        <fullName evidence="1">D-xylose-proton symporter</fullName>
    </recommendedName>
    <alternativeName>
        <fullName evidence="1">D-xylose transporter</fullName>
    </alternativeName>
</protein>
<sequence length="491" mass="53608">MNTQYNSSYIFSITLVATLGGLLFGYDTAVISGTVESLNTVFVAPQNLSESAANSLLGFCVASALIGCIIGGALGGYCSNRFGRRDSLKIAAVLFFISGVGSAWPELGFTSINPDNTVPVYLAGYVPEFVIYRIIGGIGVGLASMLSPMYIAELAPAHIRGKLVSFNQFAIIFGQLLVYCVNYFIARSGDASWLNTDGWRYMFASECIPALLFLMLLYTVPESPRWLMSRGKQEQAEGILRKIMGNTLATQAVQEIKHSLDHGRKTGGRLLMFGVGVIVIGVMLSIFQQFVGINVVLYYAPEVFKTLGASTDIALLQTIIVGVINLTFTVLAIMTVDKFGRKPLQIIGALGMAIGMFSLGTAFYTQAPGIVALLSMLFYVAAFAMSWGPVCWVLLSEIFPNAIRGKALAIAVAAQWLANYFVSWTFPMMDKNSWLVAHFHNGFSYWIYGCMGVLAALFMWKFVPETKGKTLEELEALWEPETKKTQQTATL</sequence>
<keyword id="KW-0997">Cell inner membrane</keyword>
<keyword id="KW-1003">Cell membrane</keyword>
<keyword id="KW-0472">Membrane</keyword>
<keyword id="KW-1185">Reference proteome</keyword>
<keyword id="KW-0762">Sugar transport</keyword>
<keyword id="KW-0769">Symport</keyword>
<keyword id="KW-0812">Transmembrane</keyword>
<keyword id="KW-1133">Transmembrane helix</keyword>
<keyword id="KW-0813">Transport</keyword>
<proteinExistence type="inferred from homology"/>
<gene>
    <name type="primary">xylE</name>
    <name type="ordered locus">Z5629</name>
    <name type="ordered locus">ECs5014</name>
</gene>
<comment type="function">
    <text evidence="1">Uptake of D-xylose across the boundary membrane with the concomitant transport of protons into the cell (symport system).</text>
</comment>
<comment type="catalytic activity">
    <reaction evidence="1">
        <text>D-xylose(in) + H(+)(in) = D-xylose(out) + H(+)(out)</text>
        <dbReference type="Rhea" id="RHEA:28959"/>
        <dbReference type="ChEBI" id="CHEBI:15378"/>
        <dbReference type="ChEBI" id="CHEBI:53455"/>
    </reaction>
    <physiologicalReaction direction="right-to-left" evidence="1">
        <dbReference type="Rhea" id="RHEA:28961"/>
    </physiologicalReaction>
</comment>
<comment type="subcellular location">
    <subcellularLocation>
        <location evidence="1">Cell inner membrane</location>
        <topology evidence="1">Multi-pass membrane protein</topology>
    </subcellularLocation>
</comment>
<comment type="similarity">
    <text evidence="3">Belongs to the major facilitator superfamily. Sugar transporter (TC 2.A.1.1) family.</text>
</comment>
<reference key="1">
    <citation type="journal article" date="2001" name="Nature">
        <title>Genome sequence of enterohaemorrhagic Escherichia coli O157:H7.</title>
        <authorList>
            <person name="Perna N.T."/>
            <person name="Plunkett G. III"/>
            <person name="Burland V."/>
            <person name="Mau B."/>
            <person name="Glasner J.D."/>
            <person name="Rose D.J."/>
            <person name="Mayhew G.F."/>
            <person name="Evans P.S."/>
            <person name="Gregor J."/>
            <person name="Kirkpatrick H.A."/>
            <person name="Posfai G."/>
            <person name="Hackett J."/>
            <person name="Klink S."/>
            <person name="Boutin A."/>
            <person name="Shao Y."/>
            <person name="Miller L."/>
            <person name="Grotbeck E.J."/>
            <person name="Davis N.W."/>
            <person name="Lim A."/>
            <person name="Dimalanta E.T."/>
            <person name="Potamousis K."/>
            <person name="Apodaca J."/>
            <person name="Anantharaman T.S."/>
            <person name="Lin J."/>
            <person name="Yen G."/>
            <person name="Schwartz D.C."/>
            <person name="Welch R.A."/>
            <person name="Blattner F.R."/>
        </authorList>
    </citation>
    <scope>NUCLEOTIDE SEQUENCE [LARGE SCALE GENOMIC DNA]</scope>
    <source>
        <strain>O157:H7 / EDL933 / ATCC 700927 / EHEC</strain>
    </source>
</reference>
<reference key="2">
    <citation type="journal article" date="2001" name="DNA Res.">
        <title>Complete genome sequence of enterohemorrhagic Escherichia coli O157:H7 and genomic comparison with a laboratory strain K-12.</title>
        <authorList>
            <person name="Hayashi T."/>
            <person name="Makino K."/>
            <person name="Ohnishi M."/>
            <person name="Kurokawa K."/>
            <person name="Ishii K."/>
            <person name="Yokoyama K."/>
            <person name="Han C.-G."/>
            <person name="Ohtsubo E."/>
            <person name="Nakayama K."/>
            <person name="Murata T."/>
            <person name="Tanaka M."/>
            <person name="Tobe T."/>
            <person name="Iida T."/>
            <person name="Takami H."/>
            <person name="Honda T."/>
            <person name="Sasakawa C."/>
            <person name="Ogasawara N."/>
            <person name="Yasunaga T."/>
            <person name="Kuhara S."/>
            <person name="Shiba T."/>
            <person name="Hattori M."/>
            <person name="Shinagawa H."/>
        </authorList>
    </citation>
    <scope>NUCLEOTIDE SEQUENCE [LARGE SCALE GENOMIC DNA]</scope>
    <source>
        <strain>O157:H7 / Sakai / RIMD 0509952 / EHEC</strain>
    </source>
</reference>
<dbReference type="EMBL" id="AE005174">
    <property type="protein sequence ID" value="AAG59230.1"/>
    <property type="molecule type" value="Genomic_DNA"/>
</dbReference>
<dbReference type="EMBL" id="BA000007">
    <property type="protein sequence ID" value="BAB38437.1"/>
    <property type="molecule type" value="Genomic_DNA"/>
</dbReference>
<dbReference type="PIR" id="B86096">
    <property type="entry name" value="B86096"/>
</dbReference>
<dbReference type="PIR" id="F91255">
    <property type="entry name" value="F91255"/>
</dbReference>
<dbReference type="RefSeq" id="NP_313041.1">
    <property type="nucleotide sequence ID" value="NC_002695.1"/>
</dbReference>
<dbReference type="RefSeq" id="WP_001097274.1">
    <property type="nucleotide sequence ID" value="NZ_VOAI01000027.1"/>
</dbReference>
<dbReference type="SMR" id="P0AGF5"/>
<dbReference type="STRING" id="155864.Z5629"/>
<dbReference type="GeneID" id="75169486"/>
<dbReference type="GeneID" id="914320"/>
<dbReference type="KEGG" id="ece:Z5629"/>
<dbReference type="KEGG" id="ecs:ECs_5014"/>
<dbReference type="PATRIC" id="fig|386585.9.peg.5237"/>
<dbReference type="eggNOG" id="COG0477">
    <property type="taxonomic scope" value="Bacteria"/>
</dbReference>
<dbReference type="eggNOG" id="COG2814">
    <property type="taxonomic scope" value="Bacteria"/>
</dbReference>
<dbReference type="HOGENOM" id="CLU_001265_30_5_6"/>
<dbReference type="OMA" id="WAITASF"/>
<dbReference type="Proteomes" id="UP000000558">
    <property type="component" value="Chromosome"/>
</dbReference>
<dbReference type="Proteomes" id="UP000002519">
    <property type="component" value="Chromosome"/>
</dbReference>
<dbReference type="GO" id="GO:0005886">
    <property type="term" value="C:plasma membrane"/>
    <property type="evidence" value="ECO:0007669"/>
    <property type="project" value="UniProtKB-SubCell"/>
</dbReference>
<dbReference type="GO" id="GO:0015293">
    <property type="term" value="F:symporter activity"/>
    <property type="evidence" value="ECO:0007669"/>
    <property type="project" value="UniProtKB-KW"/>
</dbReference>
<dbReference type="CDD" id="cd17359">
    <property type="entry name" value="MFS_XylE_like"/>
    <property type="match status" value="1"/>
</dbReference>
<dbReference type="FunFam" id="1.20.1250.20:FF:000122">
    <property type="entry name" value="D-xylose transporter XylE"/>
    <property type="match status" value="1"/>
</dbReference>
<dbReference type="Gene3D" id="1.20.1250.20">
    <property type="entry name" value="MFS general substrate transporter like domains"/>
    <property type="match status" value="2"/>
</dbReference>
<dbReference type="InterPro" id="IPR020846">
    <property type="entry name" value="MFS_dom"/>
</dbReference>
<dbReference type="InterPro" id="IPR005828">
    <property type="entry name" value="MFS_sugar_transport-like"/>
</dbReference>
<dbReference type="InterPro" id="IPR036259">
    <property type="entry name" value="MFS_trans_sf"/>
</dbReference>
<dbReference type="InterPro" id="IPR050814">
    <property type="entry name" value="Myo-inositol_Transporter"/>
</dbReference>
<dbReference type="InterPro" id="IPR003663">
    <property type="entry name" value="Sugar/inositol_transpt"/>
</dbReference>
<dbReference type="InterPro" id="IPR005829">
    <property type="entry name" value="Sugar_transporter_CS"/>
</dbReference>
<dbReference type="InterPro" id="IPR047984">
    <property type="entry name" value="XylE-like"/>
</dbReference>
<dbReference type="NCBIfam" id="NF007484">
    <property type="entry name" value="PRK10077.1"/>
    <property type="match status" value="1"/>
</dbReference>
<dbReference type="NCBIfam" id="TIGR00879">
    <property type="entry name" value="SP"/>
    <property type="match status" value="1"/>
</dbReference>
<dbReference type="PANTHER" id="PTHR48020">
    <property type="entry name" value="PROTON MYO-INOSITOL COTRANSPORTER"/>
    <property type="match status" value="1"/>
</dbReference>
<dbReference type="PANTHER" id="PTHR48020:SF12">
    <property type="entry name" value="PROTON MYO-INOSITOL COTRANSPORTER"/>
    <property type="match status" value="1"/>
</dbReference>
<dbReference type="Pfam" id="PF00083">
    <property type="entry name" value="Sugar_tr"/>
    <property type="match status" value="1"/>
</dbReference>
<dbReference type="PRINTS" id="PR00171">
    <property type="entry name" value="SUGRTRNSPORT"/>
</dbReference>
<dbReference type="SUPFAM" id="SSF103473">
    <property type="entry name" value="MFS general substrate transporter"/>
    <property type="match status" value="1"/>
</dbReference>
<dbReference type="PROSITE" id="PS50850">
    <property type="entry name" value="MFS"/>
    <property type="match status" value="1"/>
</dbReference>
<dbReference type="PROSITE" id="PS00216">
    <property type="entry name" value="SUGAR_TRANSPORT_1"/>
    <property type="match status" value="1"/>
</dbReference>
<dbReference type="PROSITE" id="PS00217">
    <property type="entry name" value="SUGAR_TRANSPORT_2"/>
    <property type="match status" value="1"/>
</dbReference>
<name>XYLE_ECO57</name>